<feature type="chain" id="PRO_0000385735" description="GTPase Obg">
    <location>
        <begin position="1"/>
        <end position="339"/>
    </location>
</feature>
<feature type="domain" description="Obg" evidence="2">
    <location>
        <begin position="1"/>
        <end position="159"/>
    </location>
</feature>
<feature type="domain" description="OBG-type G" evidence="1">
    <location>
        <begin position="160"/>
        <end position="327"/>
    </location>
</feature>
<feature type="binding site" evidence="1">
    <location>
        <begin position="166"/>
        <end position="173"/>
    </location>
    <ligand>
        <name>GTP</name>
        <dbReference type="ChEBI" id="CHEBI:37565"/>
    </ligand>
</feature>
<feature type="binding site" evidence="1">
    <location>
        <position position="173"/>
    </location>
    <ligand>
        <name>Mg(2+)</name>
        <dbReference type="ChEBI" id="CHEBI:18420"/>
    </ligand>
</feature>
<feature type="binding site" evidence="1">
    <location>
        <begin position="191"/>
        <end position="195"/>
    </location>
    <ligand>
        <name>GTP</name>
        <dbReference type="ChEBI" id="CHEBI:37565"/>
    </ligand>
</feature>
<feature type="binding site" evidence="1">
    <location>
        <position position="193"/>
    </location>
    <ligand>
        <name>Mg(2+)</name>
        <dbReference type="ChEBI" id="CHEBI:18420"/>
    </ligand>
</feature>
<feature type="binding site" evidence="1">
    <location>
        <begin position="212"/>
        <end position="215"/>
    </location>
    <ligand>
        <name>GTP</name>
        <dbReference type="ChEBI" id="CHEBI:37565"/>
    </ligand>
</feature>
<feature type="binding site" evidence="1">
    <location>
        <begin position="279"/>
        <end position="282"/>
    </location>
    <ligand>
        <name>GTP</name>
        <dbReference type="ChEBI" id="CHEBI:37565"/>
    </ligand>
</feature>
<feature type="binding site" evidence="1">
    <location>
        <begin position="308"/>
        <end position="310"/>
    </location>
    <ligand>
        <name>GTP</name>
        <dbReference type="ChEBI" id="CHEBI:37565"/>
    </ligand>
</feature>
<accession>A1URN4</accession>
<dbReference type="EC" id="3.6.5.-" evidence="1"/>
<dbReference type="EMBL" id="CP000524">
    <property type="protein sequence ID" value="ABM45007.1"/>
    <property type="molecule type" value="Genomic_DNA"/>
</dbReference>
<dbReference type="SMR" id="A1URN4"/>
<dbReference type="STRING" id="360095.BARBAKC583_0317"/>
<dbReference type="GeneID" id="4684588"/>
<dbReference type="KEGG" id="bbk:BARBAKC583_0317"/>
<dbReference type="PATRIC" id="fig|360095.6.peg.301"/>
<dbReference type="eggNOG" id="COG0536">
    <property type="taxonomic scope" value="Bacteria"/>
</dbReference>
<dbReference type="HOGENOM" id="CLU_011747_2_0_5"/>
<dbReference type="OrthoDB" id="9807318at2"/>
<dbReference type="Proteomes" id="UP000000643">
    <property type="component" value="Chromosome"/>
</dbReference>
<dbReference type="GO" id="GO:0005737">
    <property type="term" value="C:cytoplasm"/>
    <property type="evidence" value="ECO:0007669"/>
    <property type="project" value="UniProtKB-SubCell"/>
</dbReference>
<dbReference type="GO" id="GO:0005525">
    <property type="term" value="F:GTP binding"/>
    <property type="evidence" value="ECO:0007669"/>
    <property type="project" value="UniProtKB-UniRule"/>
</dbReference>
<dbReference type="GO" id="GO:0003924">
    <property type="term" value="F:GTPase activity"/>
    <property type="evidence" value="ECO:0007669"/>
    <property type="project" value="UniProtKB-UniRule"/>
</dbReference>
<dbReference type="GO" id="GO:0000287">
    <property type="term" value="F:magnesium ion binding"/>
    <property type="evidence" value="ECO:0007669"/>
    <property type="project" value="InterPro"/>
</dbReference>
<dbReference type="GO" id="GO:0042254">
    <property type="term" value="P:ribosome biogenesis"/>
    <property type="evidence" value="ECO:0007669"/>
    <property type="project" value="UniProtKB-UniRule"/>
</dbReference>
<dbReference type="CDD" id="cd01898">
    <property type="entry name" value="Obg"/>
    <property type="match status" value="1"/>
</dbReference>
<dbReference type="FunFam" id="2.70.210.12:FF:000001">
    <property type="entry name" value="GTPase Obg"/>
    <property type="match status" value="1"/>
</dbReference>
<dbReference type="Gene3D" id="2.70.210.12">
    <property type="entry name" value="GTP1/OBG domain"/>
    <property type="match status" value="1"/>
</dbReference>
<dbReference type="Gene3D" id="3.40.50.300">
    <property type="entry name" value="P-loop containing nucleotide triphosphate hydrolases"/>
    <property type="match status" value="1"/>
</dbReference>
<dbReference type="HAMAP" id="MF_01454">
    <property type="entry name" value="GTPase_Obg"/>
    <property type="match status" value="1"/>
</dbReference>
<dbReference type="InterPro" id="IPR031167">
    <property type="entry name" value="G_OBG"/>
</dbReference>
<dbReference type="InterPro" id="IPR006073">
    <property type="entry name" value="GTP-bd"/>
</dbReference>
<dbReference type="InterPro" id="IPR014100">
    <property type="entry name" value="GTP-bd_Obg/CgtA"/>
</dbReference>
<dbReference type="InterPro" id="IPR006074">
    <property type="entry name" value="GTP1-OBG_CS"/>
</dbReference>
<dbReference type="InterPro" id="IPR006169">
    <property type="entry name" value="GTP1_OBG_dom"/>
</dbReference>
<dbReference type="InterPro" id="IPR036726">
    <property type="entry name" value="GTP1_OBG_dom_sf"/>
</dbReference>
<dbReference type="InterPro" id="IPR045086">
    <property type="entry name" value="OBG_GTPase"/>
</dbReference>
<dbReference type="InterPro" id="IPR027417">
    <property type="entry name" value="P-loop_NTPase"/>
</dbReference>
<dbReference type="NCBIfam" id="TIGR02729">
    <property type="entry name" value="Obg_CgtA"/>
    <property type="match status" value="1"/>
</dbReference>
<dbReference type="NCBIfam" id="NF008955">
    <property type="entry name" value="PRK12297.1"/>
    <property type="match status" value="1"/>
</dbReference>
<dbReference type="NCBIfam" id="NF008956">
    <property type="entry name" value="PRK12299.1"/>
    <property type="match status" value="1"/>
</dbReference>
<dbReference type="PANTHER" id="PTHR11702">
    <property type="entry name" value="DEVELOPMENTALLY REGULATED GTP-BINDING PROTEIN-RELATED"/>
    <property type="match status" value="1"/>
</dbReference>
<dbReference type="PANTHER" id="PTHR11702:SF31">
    <property type="entry name" value="MITOCHONDRIAL RIBOSOME-ASSOCIATED GTPASE 2"/>
    <property type="match status" value="1"/>
</dbReference>
<dbReference type="Pfam" id="PF01018">
    <property type="entry name" value="GTP1_OBG"/>
    <property type="match status" value="1"/>
</dbReference>
<dbReference type="Pfam" id="PF01926">
    <property type="entry name" value="MMR_HSR1"/>
    <property type="match status" value="1"/>
</dbReference>
<dbReference type="PIRSF" id="PIRSF002401">
    <property type="entry name" value="GTP_bd_Obg/CgtA"/>
    <property type="match status" value="1"/>
</dbReference>
<dbReference type="PRINTS" id="PR00326">
    <property type="entry name" value="GTP1OBG"/>
</dbReference>
<dbReference type="SUPFAM" id="SSF82051">
    <property type="entry name" value="Obg GTP-binding protein N-terminal domain"/>
    <property type="match status" value="1"/>
</dbReference>
<dbReference type="SUPFAM" id="SSF52540">
    <property type="entry name" value="P-loop containing nucleoside triphosphate hydrolases"/>
    <property type="match status" value="1"/>
</dbReference>
<dbReference type="PROSITE" id="PS51710">
    <property type="entry name" value="G_OBG"/>
    <property type="match status" value="1"/>
</dbReference>
<dbReference type="PROSITE" id="PS00905">
    <property type="entry name" value="GTP1_OBG"/>
    <property type="match status" value="1"/>
</dbReference>
<dbReference type="PROSITE" id="PS51883">
    <property type="entry name" value="OBG"/>
    <property type="match status" value="1"/>
</dbReference>
<name>OBG_BARBK</name>
<evidence type="ECO:0000255" key="1">
    <source>
        <dbReference type="HAMAP-Rule" id="MF_01454"/>
    </source>
</evidence>
<evidence type="ECO:0000255" key="2">
    <source>
        <dbReference type="PROSITE-ProRule" id="PRU01231"/>
    </source>
</evidence>
<organism>
    <name type="scientific">Bartonella bacilliformis (strain ATCC 35685 / KC583 / Herrer 020/F12,63)</name>
    <dbReference type="NCBI Taxonomy" id="360095"/>
    <lineage>
        <taxon>Bacteria</taxon>
        <taxon>Pseudomonadati</taxon>
        <taxon>Pseudomonadota</taxon>
        <taxon>Alphaproteobacteria</taxon>
        <taxon>Hyphomicrobiales</taxon>
        <taxon>Bartonellaceae</taxon>
        <taxon>Bartonella</taxon>
    </lineage>
</organism>
<keyword id="KW-0963">Cytoplasm</keyword>
<keyword id="KW-0342">GTP-binding</keyword>
<keyword id="KW-0378">Hydrolase</keyword>
<keyword id="KW-0460">Magnesium</keyword>
<keyword id="KW-0479">Metal-binding</keyword>
<keyword id="KW-0547">Nucleotide-binding</keyword>
<reference key="1">
    <citation type="submission" date="2006-12" db="EMBL/GenBank/DDBJ databases">
        <authorList>
            <person name="Hendrix L."/>
            <person name="Mohamoud Y."/>
            <person name="Radune D."/>
            <person name="Shvartsbeyn A."/>
            <person name="Daugherty S."/>
            <person name="Dodson R."/>
            <person name="Durkin A.S."/>
            <person name="Harkins D."/>
            <person name="Huot H."/>
            <person name="Kothari S.P."/>
            <person name="Madupu R."/>
            <person name="Li J."/>
            <person name="Nelson W.C."/>
            <person name="Shrivastava S."/>
            <person name="Giglio M.G."/>
            <person name="Haft D."/>
            <person name="Selengut J."/>
            <person name="Fraser-Ligget C."/>
            <person name="Seshadri R."/>
        </authorList>
    </citation>
    <scope>NUCLEOTIDE SEQUENCE [LARGE SCALE GENOMIC DNA]</scope>
    <source>
        <strain>ATCC 35685 / KC583 / Herrer 020/F12,63</strain>
    </source>
</reference>
<sequence length="339" mass="36850">MKFLDQAKVYVRSGSGGAGAVSFRREKFIEFGGPDGGNGGRGGDVWALVVDGLNTLIDYRYQQHFRAKNGGHGKGRNMTGAKGDDVVLRVPVGTQIFEEDNKTLICDLTEVGQRYCLAKGGNGGFGNLHFVTSTNRAPRRANPGLSGEERALWLRLKLIADGGIIGLPNAGKSTFLASVTTAKPKIAAYPFTTLYPHLGVARIDAREFVLADIPGLIEGAHEGVGIGDRFLGHVERCRVLLHLISIQEEDVVKAYQIIRRELETYGNNLSDKTEIVALSQVDTLPIEECKAKQEALQKSVGQPVMMFSAVSHEGLDNVLRSVAHVIEMARADMINKHQD</sequence>
<proteinExistence type="inferred from homology"/>
<protein>
    <recommendedName>
        <fullName evidence="1">GTPase Obg</fullName>
        <ecNumber evidence="1">3.6.5.-</ecNumber>
    </recommendedName>
    <alternativeName>
        <fullName evidence="1">GTP-binding protein Obg</fullName>
    </alternativeName>
</protein>
<gene>
    <name evidence="1" type="primary">obg</name>
    <name type="ordered locus">BARBAKC583_0317</name>
</gene>
<comment type="function">
    <text evidence="1">An essential GTPase which binds GTP, GDP and possibly (p)ppGpp with moderate affinity, with high nucleotide exchange rates and a fairly low GTP hydrolysis rate. Plays a role in control of the cell cycle, stress response, ribosome biogenesis and in those bacteria that undergo differentiation, in morphogenesis control.</text>
</comment>
<comment type="cofactor">
    <cofactor evidence="1">
        <name>Mg(2+)</name>
        <dbReference type="ChEBI" id="CHEBI:18420"/>
    </cofactor>
</comment>
<comment type="subunit">
    <text evidence="1">Monomer.</text>
</comment>
<comment type="subcellular location">
    <subcellularLocation>
        <location evidence="1">Cytoplasm</location>
    </subcellularLocation>
</comment>
<comment type="similarity">
    <text evidence="1">Belongs to the TRAFAC class OBG-HflX-like GTPase superfamily. OBG GTPase family.</text>
</comment>